<dbReference type="EMBL" id="DQ898156">
    <property type="protein sequence ID" value="ABI32450.1"/>
    <property type="molecule type" value="Genomic_DNA"/>
</dbReference>
<dbReference type="RefSeq" id="YP_740144.1">
    <property type="nucleotide sequence ID" value="NC_008325.1"/>
</dbReference>
<dbReference type="SMR" id="Q0G9T5"/>
<dbReference type="GeneID" id="4266771"/>
<dbReference type="GO" id="GO:0009535">
    <property type="term" value="C:chloroplast thylakoid membrane"/>
    <property type="evidence" value="ECO:0007669"/>
    <property type="project" value="UniProtKB-SubCell"/>
</dbReference>
<dbReference type="GO" id="GO:0009539">
    <property type="term" value="C:photosystem II reaction center"/>
    <property type="evidence" value="ECO:0007669"/>
    <property type="project" value="InterPro"/>
</dbReference>
<dbReference type="GO" id="GO:0015979">
    <property type="term" value="P:photosynthesis"/>
    <property type="evidence" value="ECO:0007669"/>
    <property type="project" value="UniProtKB-UniRule"/>
</dbReference>
<dbReference type="HAMAP" id="MF_00808">
    <property type="entry name" value="PSII_PsbT"/>
    <property type="match status" value="1"/>
</dbReference>
<dbReference type="InterPro" id="IPR001743">
    <property type="entry name" value="PSII_PsbT"/>
</dbReference>
<dbReference type="InterPro" id="IPR037268">
    <property type="entry name" value="PSII_PsbT_sf"/>
</dbReference>
<dbReference type="PANTHER" id="PTHR36411">
    <property type="match status" value="1"/>
</dbReference>
<dbReference type="PANTHER" id="PTHR36411:SF2">
    <property type="entry name" value="PHOTOSYSTEM II REACTION CENTER PROTEIN T"/>
    <property type="match status" value="1"/>
</dbReference>
<dbReference type="Pfam" id="PF01405">
    <property type="entry name" value="PsbT"/>
    <property type="match status" value="1"/>
</dbReference>
<dbReference type="SUPFAM" id="SSF161029">
    <property type="entry name" value="Photosystem II reaction center protein T, PsbT"/>
    <property type="match status" value="1"/>
</dbReference>
<keyword id="KW-0150">Chloroplast</keyword>
<keyword id="KW-0472">Membrane</keyword>
<keyword id="KW-0602">Photosynthesis</keyword>
<keyword id="KW-0604">Photosystem II</keyword>
<keyword id="KW-0934">Plastid</keyword>
<keyword id="KW-0793">Thylakoid</keyword>
<keyword id="KW-0812">Transmembrane</keyword>
<keyword id="KW-1133">Transmembrane helix</keyword>
<protein>
    <recommendedName>
        <fullName evidence="1">Photosystem II reaction center protein T</fullName>
        <shortName evidence="1">PSII-T</shortName>
    </recommendedName>
</protein>
<sequence>MEALVYTFLLVSTLGIIFFAIFFREPPKVPTKK</sequence>
<geneLocation type="chloroplast"/>
<comment type="function">
    <text evidence="1">Found at the monomer-monomer interface of the photosystem II (PS II) dimer, plays a role in assembly and dimerization of PSII. PSII is a light-driven water plastoquinone oxidoreductase, using light energy to abstract electrons from H(2)O, generating a proton gradient subsequently used for ATP formation.</text>
</comment>
<comment type="subunit">
    <text evidence="1">PSII is composed of 1 copy each of membrane proteins PsbA, PsbB, PsbC, PsbD, PsbE, PsbF, PsbH, PsbI, PsbJ, PsbK, PsbL, PsbM, PsbT, PsbY, PsbZ, Psb30/Ycf12, at least 3 peripheral proteins of the oxygen-evolving complex and a large number of cofactors. It forms dimeric complexes.</text>
</comment>
<comment type="subcellular location">
    <subcellularLocation>
        <location evidence="1">Plastid</location>
        <location evidence="1">Chloroplast thylakoid membrane</location>
        <topology evidence="1">Single-pass membrane protein</topology>
    </subcellularLocation>
</comment>
<comment type="similarity">
    <text evidence="1">Belongs to the PsbT family.</text>
</comment>
<proteinExistence type="inferred from homology"/>
<accession>Q0G9T5</accession>
<gene>
    <name evidence="1" type="primary">psbT</name>
</gene>
<name>PSBT_DAUCA</name>
<feature type="chain" id="PRO_0000276292" description="Photosystem II reaction center protein T">
    <location>
        <begin position="1"/>
        <end position="33"/>
    </location>
</feature>
<feature type="transmembrane region" description="Helical" evidence="1">
    <location>
        <begin position="3"/>
        <end position="23"/>
    </location>
</feature>
<evidence type="ECO:0000255" key="1">
    <source>
        <dbReference type="HAMAP-Rule" id="MF_00808"/>
    </source>
</evidence>
<organism>
    <name type="scientific">Daucus carota</name>
    <name type="common">Wild carrot</name>
    <dbReference type="NCBI Taxonomy" id="4039"/>
    <lineage>
        <taxon>Eukaryota</taxon>
        <taxon>Viridiplantae</taxon>
        <taxon>Streptophyta</taxon>
        <taxon>Embryophyta</taxon>
        <taxon>Tracheophyta</taxon>
        <taxon>Spermatophyta</taxon>
        <taxon>Magnoliopsida</taxon>
        <taxon>eudicotyledons</taxon>
        <taxon>Gunneridae</taxon>
        <taxon>Pentapetalae</taxon>
        <taxon>asterids</taxon>
        <taxon>campanulids</taxon>
        <taxon>Apiales</taxon>
        <taxon>Apiaceae</taxon>
        <taxon>Apioideae</taxon>
        <taxon>Scandiceae</taxon>
        <taxon>Daucinae</taxon>
        <taxon>Daucus</taxon>
        <taxon>Daucus sect. Daucus</taxon>
    </lineage>
</organism>
<reference key="1">
    <citation type="journal article" date="2006" name="BMC Genomics">
        <title>Complete plastid genome sequence of Daucus carota: implications for biotechnology and phylogeny of angiosperms.</title>
        <authorList>
            <person name="Ruhlman T."/>
            <person name="Lee S.-B."/>
            <person name="Jansen R.K."/>
            <person name="Hostetler J.B."/>
            <person name="Tallon L.J."/>
            <person name="Town C.D."/>
            <person name="Daniell H."/>
        </authorList>
    </citation>
    <scope>NUCLEOTIDE SEQUENCE [LARGE SCALE GENOMIC DNA]</scope>
    <source>
        <strain>cv. Danvers Half-long</strain>
    </source>
</reference>